<gene>
    <name type="primary">lolA</name>
    <name type="ordered locus">NMB0622</name>
</gene>
<keyword id="KW-0143">Chaperone</keyword>
<keyword id="KW-0574">Periplasm</keyword>
<keyword id="KW-0653">Protein transport</keyword>
<keyword id="KW-1185">Reference proteome</keyword>
<keyword id="KW-0732">Signal</keyword>
<keyword id="KW-0813">Transport</keyword>
<proteinExistence type="inferred from homology"/>
<dbReference type="EMBL" id="AE002098">
    <property type="protein sequence ID" value="AAF41048.1"/>
    <property type="molecule type" value="Genomic_DNA"/>
</dbReference>
<dbReference type="PIR" id="C81178">
    <property type="entry name" value="C81178"/>
</dbReference>
<dbReference type="RefSeq" id="NP_273666.1">
    <property type="nucleotide sequence ID" value="NC_003112.2"/>
</dbReference>
<dbReference type="RefSeq" id="WP_002222831.1">
    <property type="nucleotide sequence ID" value="NC_003112.2"/>
</dbReference>
<dbReference type="SMR" id="P57068"/>
<dbReference type="FunCoup" id="P57068">
    <property type="interactions" value="86"/>
</dbReference>
<dbReference type="STRING" id="122586.NMB0622"/>
<dbReference type="PaxDb" id="122586-NMB0622"/>
<dbReference type="KEGG" id="nme:NMB0622"/>
<dbReference type="PATRIC" id="fig|122586.8.peg.787"/>
<dbReference type="HOGENOM" id="CLU_087560_0_1_4"/>
<dbReference type="InParanoid" id="P57068"/>
<dbReference type="OrthoDB" id="9787361at2"/>
<dbReference type="Proteomes" id="UP000000425">
    <property type="component" value="Chromosome"/>
</dbReference>
<dbReference type="GO" id="GO:0042597">
    <property type="term" value="C:periplasmic space"/>
    <property type="evidence" value="ECO:0007669"/>
    <property type="project" value="UniProtKB-SubCell"/>
</dbReference>
<dbReference type="GO" id="GO:0044874">
    <property type="term" value="P:lipoprotein localization to outer membrane"/>
    <property type="evidence" value="ECO:0007669"/>
    <property type="project" value="UniProtKB-UniRule"/>
</dbReference>
<dbReference type="GO" id="GO:0042953">
    <property type="term" value="P:lipoprotein transport"/>
    <property type="evidence" value="ECO:0007669"/>
    <property type="project" value="InterPro"/>
</dbReference>
<dbReference type="CDD" id="cd16325">
    <property type="entry name" value="LolA"/>
    <property type="match status" value="1"/>
</dbReference>
<dbReference type="FunFam" id="2.50.20.10:FF:000008">
    <property type="entry name" value="Outer-membrane lipoprotein carrier protein"/>
    <property type="match status" value="1"/>
</dbReference>
<dbReference type="Gene3D" id="2.50.20.10">
    <property type="entry name" value="Lipoprotein localisation LolA/LolB/LppX"/>
    <property type="match status" value="1"/>
</dbReference>
<dbReference type="HAMAP" id="MF_00240">
    <property type="entry name" value="LolA"/>
    <property type="match status" value="1"/>
</dbReference>
<dbReference type="InterPro" id="IPR029046">
    <property type="entry name" value="LolA/LolB/LppX"/>
</dbReference>
<dbReference type="InterPro" id="IPR004564">
    <property type="entry name" value="OM_lipoprot_carrier_LolA-like"/>
</dbReference>
<dbReference type="InterPro" id="IPR018323">
    <property type="entry name" value="OM_lipoprot_carrier_LolA_Pbac"/>
</dbReference>
<dbReference type="NCBIfam" id="TIGR00547">
    <property type="entry name" value="lolA"/>
    <property type="match status" value="1"/>
</dbReference>
<dbReference type="PANTHER" id="PTHR35869">
    <property type="entry name" value="OUTER-MEMBRANE LIPOPROTEIN CARRIER PROTEIN"/>
    <property type="match status" value="1"/>
</dbReference>
<dbReference type="PANTHER" id="PTHR35869:SF1">
    <property type="entry name" value="OUTER-MEMBRANE LIPOPROTEIN CARRIER PROTEIN"/>
    <property type="match status" value="1"/>
</dbReference>
<dbReference type="Pfam" id="PF03548">
    <property type="entry name" value="LolA"/>
    <property type="match status" value="1"/>
</dbReference>
<dbReference type="SUPFAM" id="SSF89392">
    <property type="entry name" value="Prokaryotic lipoproteins and lipoprotein localization factors"/>
    <property type="match status" value="1"/>
</dbReference>
<comment type="function">
    <text evidence="1">Participates in the translocation of lipoproteins from the inner membrane to the outer membrane. Only forms a complex with a lipoprotein if the residue after the N-terminal Cys is not an aspartate (The Asp acts as a targeting signal to indicate that the lipoprotein should stay in the inner membrane) (By similarity).</text>
</comment>
<comment type="subunit">
    <text evidence="1">Monomer.</text>
</comment>
<comment type="subcellular location">
    <subcellularLocation>
        <location evidence="1">Periplasm</location>
    </subcellularLocation>
</comment>
<comment type="similarity">
    <text evidence="3">Belongs to the LolA family.</text>
</comment>
<feature type="signal peptide" evidence="2">
    <location>
        <begin position="1"/>
        <end position="23"/>
    </location>
</feature>
<feature type="chain" id="PRO_0000018265" description="Outer-membrane lipoprotein carrier protein">
    <location>
        <begin position="24"/>
        <end position="207"/>
    </location>
</feature>
<protein>
    <recommendedName>
        <fullName>Outer-membrane lipoprotein carrier protein</fullName>
    </recommendedName>
</protein>
<accession>P57068</accession>
<evidence type="ECO:0000250" key="1"/>
<evidence type="ECO:0000255" key="2"/>
<evidence type="ECO:0000305" key="3"/>
<sequence>MMKPHNLFQFLAVCSLTVAVASAQAGAVDALKQFNNDADGISGSFTQTVQSKKKTQTAHGTFKILRPGLFKWEYTKPYRQTIVGDGQTVWLYDVDLAQVTKSSQDQAIGGSPAAILSNKTALESSYTLKEDGSSNGIDYVLATPKRNNAGYQYIRIGFKGGNLAAMQLKDSFGNQTSISFGGLNTNPQLSRGAFKFTPPKGVDVLSN</sequence>
<name>LOLA_NEIMB</name>
<organism>
    <name type="scientific">Neisseria meningitidis serogroup B (strain ATCC BAA-335 / MC58)</name>
    <dbReference type="NCBI Taxonomy" id="122586"/>
    <lineage>
        <taxon>Bacteria</taxon>
        <taxon>Pseudomonadati</taxon>
        <taxon>Pseudomonadota</taxon>
        <taxon>Betaproteobacteria</taxon>
        <taxon>Neisseriales</taxon>
        <taxon>Neisseriaceae</taxon>
        <taxon>Neisseria</taxon>
    </lineage>
</organism>
<reference key="1">
    <citation type="journal article" date="2000" name="Science">
        <title>Complete genome sequence of Neisseria meningitidis serogroup B strain MC58.</title>
        <authorList>
            <person name="Tettelin H."/>
            <person name="Saunders N.J."/>
            <person name="Heidelberg J.F."/>
            <person name="Jeffries A.C."/>
            <person name="Nelson K.E."/>
            <person name="Eisen J.A."/>
            <person name="Ketchum K.A."/>
            <person name="Hood D.W."/>
            <person name="Peden J.F."/>
            <person name="Dodson R.J."/>
            <person name="Nelson W.C."/>
            <person name="Gwinn M.L."/>
            <person name="DeBoy R.T."/>
            <person name="Peterson J.D."/>
            <person name="Hickey E.K."/>
            <person name="Haft D.H."/>
            <person name="Salzberg S.L."/>
            <person name="White O."/>
            <person name="Fleischmann R.D."/>
            <person name="Dougherty B.A."/>
            <person name="Mason T.M."/>
            <person name="Ciecko A."/>
            <person name="Parksey D.S."/>
            <person name="Blair E."/>
            <person name="Cittone H."/>
            <person name="Clark E.B."/>
            <person name="Cotton M.D."/>
            <person name="Utterback T.R."/>
            <person name="Khouri H.M."/>
            <person name="Qin H."/>
            <person name="Vamathevan J.J."/>
            <person name="Gill J."/>
            <person name="Scarlato V."/>
            <person name="Masignani V."/>
            <person name="Pizza M."/>
            <person name="Grandi G."/>
            <person name="Sun L."/>
            <person name="Smith H.O."/>
            <person name="Fraser C.M."/>
            <person name="Moxon E.R."/>
            <person name="Rappuoli R."/>
            <person name="Venter J.C."/>
        </authorList>
    </citation>
    <scope>NUCLEOTIDE SEQUENCE [LARGE SCALE GENOMIC DNA]</scope>
    <source>
        <strain>ATCC BAA-335 / MC58</strain>
    </source>
</reference>